<name>Y1136_OCEIH</name>
<feature type="chain" id="PRO_0000109982" description="UPF0342 protein OB1136">
    <location>
        <begin position="1"/>
        <end position="117"/>
    </location>
</feature>
<proteinExistence type="inferred from homology"/>
<comment type="similarity">
    <text evidence="1">Belongs to the UPF0342 family.</text>
</comment>
<keyword id="KW-1185">Reference proteome</keyword>
<dbReference type="EMBL" id="BA000028">
    <property type="protein sequence ID" value="BAC13092.1"/>
    <property type="molecule type" value="Genomic_DNA"/>
</dbReference>
<dbReference type="RefSeq" id="WP_011065537.1">
    <property type="nucleotide sequence ID" value="NC_004193.1"/>
</dbReference>
<dbReference type="SMR" id="Q8CUH1"/>
<dbReference type="STRING" id="221109.gene:10733375"/>
<dbReference type="KEGG" id="oih:OB1136"/>
<dbReference type="eggNOG" id="COG3679">
    <property type="taxonomic scope" value="Bacteria"/>
</dbReference>
<dbReference type="HOGENOM" id="CLU_140243_3_0_9"/>
<dbReference type="OrthoDB" id="9811402at2"/>
<dbReference type="PhylomeDB" id="Q8CUH1"/>
<dbReference type="Proteomes" id="UP000000822">
    <property type="component" value="Chromosome"/>
</dbReference>
<dbReference type="Gene3D" id="1.20.1500.10">
    <property type="entry name" value="YheA/YmcA-like"/>
    <property type="match status" value="1"/>
</dbReference>
<dbReference type="HAMAP" id="MF_01526">
    <property type="entry name" value="UPF0342"/>
    <property type="match status" value="1"/>
</dbReference>
<dbReference type="InterPro" id="IPR010368">
    <property type="entry name" value="Com_YlbF"/>
</dbReference>
<dbReference type="InterPro" id="IPR023378">
    <property type="entry name" value="YheA/YmcA-like_dom_sf"/>
</dbReference>
<dbReference type="Pfam" id="PF06133">
    <property type="entry name" value="Com_YlbF"/>
    <property type="match status" value="1"/>
</dbReference>
<dbReference type="SUPFAM" id="SSF158622">
    <property type="entry name" value="YheA/YmcA-like"/>
    <property type="match status" value="1"/>
</dbReference>
<sequence length="117" mass="13489">MANTLDVANNLEQALRESDEFKSLKEAYEAVMGEPTAKQMFENFRDTQLSLQEKQMQGIEITEEEVEKARQVVETVQQHEGISKLMEEEQRLNNLINEISQIITKPLEDLYGTAEQN</sequence>
<gene>
    <name type="ordered locus">OB1136</name>
</gene>
<reference key="1">
    <citation type="journal article" date="2002" name="Nucleic Acids Res.">
        <title>Genome sequence of Oceanobacillus iheyensis isolated from the Iheya Ridge and its unexpected adaptive capabilities to extreme environments.</title>
        <authorList>
            <person name="Takami H."/>
            <person name="Takaki Y."/>
            <person name="Uchiyama I."/>
        </authorList>
    </citation>
    <scope>NUCLEOTIDE SEQUENCE [LARGE SCALE GENOMIC DNA]</scope>
    <source>
        <strain>DSM 14371 / CIP 107618 / JCM 11309 / KCTC 3954 / HTE831</strain>
    </source>
</reference>
<evidence type="ECO:0000255" key="1">
    <source>
        <dbReference type="HAMAP-Rule" id="MF_01526"/>
    </source>
</evidence>
<organism>
    <name type="scientific">Oceanobacillus iheyensis (strain DSM 14371 / CIP 107618 / JCM 11309 / KCTC 3954 / HTE831)</name>
    <dbReference type="NCBI Taxonomy" id="221109"/>
    <lineage>
        <taxon>Bacteria</taxon>
        <taxon>Bacillati</taxon>
        <taxon>Bacillota</taxon>
        <taxon>Bacilli</taxon>
        <taxon>Bacillales</taxon>
        <taxon>Bacillaceae</taxon>
        <taxon>Oceanobacillus</taxon>
    </lineage>
</organism>
<accession>Q8CUH1</accession>
<protein>
    <recommendedName>
        <fullName evidence="1">UPF0342 protein OB1136</fullName>
    </recommendedName>
</protein>